<proteinExistence type="evidence at transcript level"/>
<evidence type="ECO:0000250" key="1"/>
<evidence type="ECO:0000255" key="2"/>
<evidence type="ECO:0000269" key="3">
    <source>
    </source>
</evidence>
<evidence type="ECO:0000305" key="4"/>
<protein>
    <recommendedName>
        <fullName>Equilibrative nucleotide transporter 2</fullName>
        <shortName>AtENT2</shortName>
    </recommendedName>
    <alternativeName>
        <fullName>Nucleoside transporter ENT2</fullName>
    </alternativeName>
</protein>
<gene>
    <name type="primary">ENT2</name>
    <name type="ordered locus">At3g09990</name>
    <name type="ORF">T22K18.20</name>
</gene>
<reference key="1">
    <citation type="journal article" date="2003" name="J. Biol. Chem.">
        <title>Equilibrative nucleoside transporters of Arabidopsis thaliana. cDNA cloning, expression pattern, and analysis of transport activities.</title>
        <authorList>
            <person name="Li G."/>
            <person name="Liu K."/>
            <person name="Baldwin S.A."/>
            <person name="Wang D."/>
        </authorList>
    </citation>
    <scope>NUCLEOTIDE SEQUENCE [MRNA]</scope>
    <scope>TISSUE SPECIFICITY</scope>
</reference>
<reference key="2">
    <citation type="journal article" date="2000" name="Nature">
        <title>Sequence and analysis of chromosome 3 of the plant Arabidopsis thaliana.</title>
        <authorList>
            <person name="Salanoubat M."/>
            <person name="Lemcke K."/>
            <person name="Rieger M."/>
            <person name="Ansorge W."/>
            <person name="Unseld M."/>
            <person name="Fartmann B."/>
            <person name="Valle G."/>
            <person name="Bloecker H."/>
            <person name="Perez-Alonso M."/>
            <person name="Obermaier B."/>
            <person name="Delseny M."/>
            <person name="Boutry M."/>
            <person name="Grivell L.A."/>
            <person name="Mache R."/>
            <person name="Puigdomenech P."/>
            <person name="De Simone V."/>
            <person name="Choisne N."/>
            <person name="Artiguenave F."/>
            <person name="Robert C."/>
            <person name="Brottier P."/>
            <person name="Wincker P."/>
            <person name="Cattolico L."/>
            <person name="Weissenbach J."/>
            <person name="Saurin W."/>
            <person name="Quetier F."/>
            <person name="Schaefer M."/>
            <person name="Mueller-Auer S."/>
            <person name="Gabel C."/>
            <person name="Fuchs M."/>
            <person name="Benes V."/>
            <person name="Wurmbach E."/>
            <person name="Drzonek H."/>
            <person name="Erfle H."/>
            <person name="Jordan N."/>
            <person name="Bangert S."/>
            <person name="Wiedelmann R."/>
            <person name="Kranz H."/>
            <person name="Voss H."/>
            <person name="Holland R."/>
            <person name="Brandt P."/>
            <person name="Nyakatura G."/>
            <person name="Vezzi A."/>
            <person name="D'Angelo M."/>
            <person name="Pallavicini A."/>
            <person name="Toppo S."/>
            <person name="Simionati B."/>
            <person name="Conrad A."/>
            <person name="Hornischer K."/>
            <person name="Kauer G."/>
            <person name="Loehnert T.-H."/>
            <person name="Nordsiek G."/>
            <person name="Reichelt J."/>
            <person name="Scharfe M."/>
            <person name="Schoen O."/>
            <person name="Bargues M."/>
            <person name="Terol J."/>
            <person name="Climent J."/>
            <person name="Navarro P."/>
            <person name="Collado C."/>
            <person name="Perez-Perez A."/>
            <person name="Ottenwaelder B."/>
            <person name="Duchemin D."/>
            <person name="Cooke R."/>
            <person name="Laudie M."/>
            <person name="Berger-Llauro C."/>
            <person name="Purnelle B."/>
            <person name="Masuy D."/>
            <person name="de Haan M."/>
            <person name="Maarse A.C."/>
            <person name="Alcaraz J.-P."/>
            <person name="Cottet A."/>
            <person name="Casacuberta E."/>
            <person name="Monfort A."/>
            <person name="Argiriou A."/>
            <person name="Flores M."/>
            <person name="Liguori R."/>
            <person name="Vitale D."/>
            <person name="Mannhaupt G."/>
            <person name="Haase D."/>
            <person name="Schoof H."/>
            <person name="Rudd S."/>
            <person name="Zaccaria P."/>
            <person name="Mewes H.-W."/>
            <person name="Mayer K.F.X."/>
            <person name="Kaul S."/>
            <person name="Town C.D."/>
            <person name="Koo H.L."/>
            <person name="Tallon L.J."/>
            <person name="Jenkins J."/>
            <person name="Rooney T."/>
            <person name="Rizzo M."/>
            <person name="Walts A."/>
            <person name="Utterback T."/>
            <person name="Fujii C.Y."/>
            <person name="Shea T.P."/>
            <person name="Creasy T.H."/>
            <person name="Haas B."/>
            <person name="Maiti R."/>
            <person name="Wu D."/>
            <person name="Peterson J."/>
            <person name="Van Aken S."/>
            <person name="Pai G."/>
            <person name="Militscher J."/>
            <person name="Sellers P."/>
            <person name="Gill J.E."/>
            <person name="Feldblyum T.V."/>
            <person name="Preuss D."/>
            <person name="Lin X."/>
            <person name="Nierman W.C."/>
            <person name="Salzberg S.L."/>
            <person name="White O."/>
            <person name="Venter J.C."/>
            <person name="Fraser C.M."/>
            <person name="Kaneko T."/>
            <person name="Nakamura Y."/>
            <person name="Sato S."/>
            <person name="Kato T."/>
            <person name="Asamizu E."/>
            <person name="Sasamoto S."/>
            <person name="Kimura T."/>
            <person name="Idesawa K."/>
            <person name="Kawashima K."/>
            <person name="Kishida Y."/>
            <person name="Kiyokawa C."/>
            <person name="Kohara M."/>
            <person name="Matsumoto M."/>
            <person name="Matsuno A."/>
            <person name="Muraki A."/>
            <person name="Nakayama S."/>
            <person name="Nakazaki N."/>
            <person name="Shinpo S."/>
            <person name="Takeuchi C."/>
            <person name="Wada T."/>
            <person name="Watanabe A."/>
            <person name="Yamada M."/>
            <person name="Yasuda M."/>
            <person name="Tabata S."/>
        </authorList>
    </citation>
    <scope>NUCLEOTIDE SEQUENCE [LARGE SCALE GENOMIC DNA]</scope>
    <source>
        <strain>cv. Columbia</strain>
    </source>
</reference>
<reference key="3">
    <citation type="journal article" date="2017" name="Plant J.">
        <title>Araport11: a complete reannotation of the Arabidopsis thaliana reference genome.</title>
        <authorList>
            <person name="Cheng C.Y."/>
            <person name="Krishnakumar V."/>
            <person name="Chan A.P."/>
            <person name="Thibaud-Nissen F."/>
            <person name="Schobel S."/>
            <person name="Town C.D."/>
        </authorList>
    </citation>
    <scope>GENOME REANNOTATION</scope>
    <source>
        <strain>cv. Columbia</strain>
    </source>
</reference>
<dbReference type="EMBL" id="AF426399">
    <property type="protein sequence ID" value="AAL25095.1"/>
    <property type="molecule type" value="mRNA"/>
</dbReference>
<dbReference type="EMBL" id="AC010927">
    <property type="protein sequence ID" value="AAF04424.1"/>
    <property type="molecule type" value="Genomic_DNA"/>
</dbReference>
<dbReference type="EMBL" id="CP002686">
    <property type="protein sequence ID" value="AEE74845.1"/>
    <property type="molecule type" value="Genomic_DNA"/>
</dbReference>
<dbReference type="RefSeq" id="NP_187610.1">
    <property type="nucleotide sequence ID" value="NM_111834.1"/>
</dbReference>
<dbReference type="SMR" id="Q9SR64"/>
<dbReference type="FunCoup" id="Q9SR64">
    <property type="interactions" value="118"/>
</dbReference>
<dbReference type="STRING" id="3702.Q9SR64"/>
<dbReference type="PaxDb" id="3702-AT3G09990.1"/>
<dbReference type="EnsemblPlants" id="AT3G09990.1">
    <property type="protein sequence ID" value="AT3G09990.1"/>
    <property type="gene ID" value="AT3G09990"/>
</dbReference>
<dbReference type="GeneID" id="820160"/>
<dbReference type="Gramene" id="AT3G09990.1">
    <property type="protein sequence ID" value="AT3G09990.1"/>
    <property type="gene ID" value="AT3G09990"/>
</dbReference>
<dbReference type="KEGG" id="ath:AT3G09990"/>
<dbReference type="Araport" id="AT3G09990"/>
<dbReference type="TAIR" id="AT3G09990"/>
<dbReference type="eggNOG" id="KOG1479">
    <property type="taxonomic scope" value="Eukaryota"/>
</dbReference>
<dbReference type="HOGENOM" id="CLU_021611_5_1_1"/>
<dbReference type="InParanoid" id="Q9SR64"/>
<dbReference type="OMA" id="IYQSFAI"/>
<dbReference type="OrthoDB" id="1856718at2759"/>
<dbReference type="PhylomeDB" id="Q9SR64"/>
<dbReference type="PRO" id="PR:Q9SR64"/>
<dbReference type="Proteomes" id="UP000006548">
    <property type="component" value="Chromosome 3"/>
</dbReference>
<dbReference type="ExpressionAtlas" id="Q9SR64">
    <property type="expression patterns" value="baseline"/>
</dbReference>
<dbReference type="GO" id="GO:0005886">
    <property type="term" value="C:plasma membrane"/>
    <property type="evidence" value="ECO:0007669"/>
    <property type="project" value="UniProtKB-SubCell"/>
</dbReference>
<dbReference type="GO" id="GO:0005337">
    <property type="term" value="F:nucleoside transmembrane transporter activity"/>
    <property type="evidence" value="ECO:0007669"/>
    <property type="project" value="InterPro"/>
</dbReference>
<dbReference type="InterPro" id="IPR002259">
    <property type="entry name" value="Eqnu_transpt"/>
</dbReference>
<dbReference type="InterPro" id="IPR036259">
    <property type="entry name" value="MFS_trans_sf"/>
</dbReference>
<dbReference type="PANTHER" id="PTHR10332">
    <property type="entry name" value="EQUILIBRATIVE NUCLEOSIDE TRANSPORTER"/>
    <property type="match status" value="1"/>
</dbReference>
<dbReference type="PANTHER" id="PTHR10332:SF30">
    <property type="entry name" value="EQUILIBRATIVE NUCLEOTIDE TRANSPORTER 2"/>
    <property type="match status" value="1"/>
</dbReference>
<dbReference type="Pfam" id="PF01733">
    <property type="entry name" value="Nucleoside_tran"/>
    <property type="match status" value="1"/>
</dbReference>
<dbReference type="PIRSF" id="PIRSF016379">
    <property type="entry name" value="ENT"/>
    <property type="match status" value="1"/>
</dbReference>
<dbReference type="PRINTS" id="PR01130">
    <property type="entry name" value="DERENTRNSPRT"/>
</dbReference>
<dbReference type="SUPFAM" id="SSF103473">
    <property type="entry name" value="MFS general substrate transporter"/>
    <property type="match status" value="1"/>
</dbReference>
<accession>Q9SR64</accession>
<accession>Q944N9</accession>
<comment type="function">
    <text evidence="1">May be involved in nucleoside transport.</text>
</comment>
<comment type="subcellular location">
    <subcellularLocation>
        <location evidence="1">Cell membrane</location>
        <topology evidence="4">Multi-pass membrane protein</topology>
    </subcellularLocation>
    <text>Plasma membrane.</text>
</comment>
<comment type="tissue specificity">
    <text evidence="3">Expressed in leaves and flowers.</text>
</comment>
<comment type="similarity">
    <text evidence="4">Belongs to the SLC29A/ENT transporter (TC 2.A.57) family.</text>
</comment>
<sequence>MDTSILAVTTNPKGKNYALAVCWLLGVGCLLAWNSMLTIVDYYAYLFPWYHPSRILTIIYQSFSIGALSVLVHKEARLNTRRRNLFGYSLFSLGSLAVLVLNLATSGRGGIGSFIGVCVISAAFGLADAHVYGGMIGDLSMMTPEFLQSFLAGLAASGALTSGLRLVIKAAFKNSRDGLRKGATLFFAMSASFELVCVLLYAYVFPRIPVVKYYRAKAIIQGSRTVWADLAAGGIQVQPITQDEEALRYDHRLNKGDLMLLYSDLAVTLFLVYLLTFSIFPGFLSEDTGKYSLGDWYALVLIAVFNVSDLVGRYVPMVKKLKMKSRKCLLITSLGRLLLIPAFNITGIYGSQGWMIFLMSVLGLSNGYLTVCVITSAPYDLLAPEQNALGNLLVLYICGGMFAGVACDWLWLVGKDW</sequence>
<organism>
    <name type="scientific">Arabidopsis thaliana</name>
    <name type="common">Mouse-ear cress</name>
    <dbReference type="NCBI Taxonomy" id="3702"/>
    <lineage>
        <taxon>Eukaryota</taxon>
        <taxon>Viridiplantae</taxon>
        <taxon>Streptophyta</taxon>
        <taxon>Embryophyta</taxon>
        <taxon>Tracheophyta</taxon>
        <taxon>Spermatophyta</taxon>
        <taxon>Magnoliopsida</taxon>
        <taxon>eudicotyledons</taxon>
        <taxon>Gunneridae</taxon>
        <taxon>Pentapetalae</taxon>
        <taxon>rosids</taxon>
        <taxon>malvids</taxon>
        <taxon>Brassicales</taxon>
        <taxon>Brassicaceae</taxon>
        <taxon>Camelineae</taxon>
        <taxon>Arabidopsis</taxon>
    </lineage>
</organism>
<keyword id="KW-1003">Cell membrane</keyword>
<keyword id="KW-0472">Membrane</keyword>
<keyword id="KW-1185">Reference proteome</keyword>
<keyword id="KW-0812">Transmembrane</keyword>
<keyword id="KW-1133">Transmembrane helix</keyword>
<keyword id="KW-0813">Transport</keyword>
<name>ENT2_ARATH</name>
<feature type="chain" id="PRO_0000419155" description="Equilibrative nucleotide transporter 2">
    <location>
        <begin position="1"/>
        <end position="417"/>
    </location>
</feature>
<feature type="transmembrane region" description="Helical" evidence="2">
    <location>
        <begin position="20"/>
        <end position="40"/>
    </location>
</feature>
<feature type="transmembrane region" description="Helical" evidence="2">
    <location>
        <begin position="52"/>
        <end position="72"/>
    </location>
</feature>
<feature type="transmembrane region" description="Helical" evidence="2">
    <location>
        <begin position="85"/>
        <end position="105"/>
    </location>
</feature>
<feature type="transmembrane region" description="Helical" evidence="2">
    <location>
        <begin position="109"/>
        <end position="129"/>
    </location>
</feature>
<feature type="transmembrane region" description="Helical" evidence="2">
    <location>
        <begin position="144"/>
        <end position="164"/>
    </location>
</feature>
<feature type="transmembrane region" description="Helical" evidence="2">
    <location>
        <begin position="185"/>
        <end position="205"/>
    </location>
</feature>
<feature type="transmembrane region" description="Helical" evidence="2">
    <location>
        <begin position="265"/>
        <end position="285"/>
    </location>
</feature>
<feature type="transmembrane region" description="Helical" evidence="2">
    <location>
        <begin position="292"/>
        <end position="312"/>
    </location>
</feature>
<feature type="transmembrane region" description="Helical" evidence="2">
    <location>
        <begin position="328"/>
        <end position="348"/>
    </location>
</feature>
<feature type="transmembrane region" description="Helical" evidence="2">
    <location>
        <begin position="354"/>
        <end position="374"/>
    </location>
</feature>
<feature type="transmembrane region" description="Helical" evidence="2">
    <location>
        <begin position="393"/>
        <end position="413"/>
    </location>
</feature>
<feature type="sequence conflict" description="In Ref. 1; AAL25095." evidence="4" ref="1">
    <original>F</original>
    <variation>L</variation>
    <location>
        <position position="187"/>
    </location>
</feature>